<accession>Q65JP7</accession>
<accession>Q62V52</accession>
<sequence>MLKQWFNVGKIVNTHGVKGEVRVISRTDFPEERYKPGNALYLFLEGKDEPVQVTVSAHRLHKQFHLLQFKEVETLTEAEKLKNALIKVPEDQLSQLAEDEYYFHEIIGCDVFSEDGDLIGKVKEILTPGANDVWVVARPGKKDALIPYIDAVVKEINVADKTIKIHIMEGLLDE</sequence>
<keyword id="KW-0143">Chaperone</keyword>
<keyword id="KW-0963">Cytoplasm</keyword>
<keyword id="KW-1185">Reference proteome</keyword>
<keyword id="KW-0690">Ribosome biogenesis</keyword>
<keyword id="KW-0698">rRNA processing</keyword>
<reference key="1">
    <citation type="journal article" date="2004" name="J. Mol. Microbiol. Biotechnol.">
        <title>The complete genome sequence of Bacillus licheniformis DSM13, an organism with great industrial potential.</title>
        <authorList>
            <person name="Veith B."/>
            <person name="Herzberg C."/>
            <person name="Steckel S."/>
            <person name="Feesche J."/>
            <person name="Maurer K.H."/>
            <person name="Ehrenreich P."/>
            <person name="Baeumer S."/>
            <person name="Henne A."/>
            <person name="Liesegang H."/>
            <person name="Merkl R."/>
            <person name="Ehrenreich A."/>
            <person name="Gottschalk G."/>
        </authorList>
    </citation>
    <scope>NUCLEOTIDE SEQUENCE [LARGE SCALE GENOMIC DNA]</scope>
    <source>
        <strain>ATCC 14580 / DSM 13 / JCM 2505 / CCUG 7422 / NBRC 12200 / NCIMB 9375 / NCTC 10341 / NRRL NRS-1264 / Gibson 46</strain>
    </source>
</reference>
<reference key="2">
    <citation type="journal article" date="2004" name="Genome Biol.">
        <title>Complete genome sequence of the industrial bacterium Bacillus licheniformis and comparisons with closely related Bacillus species.</title>
        <authorList>
            <person name="Rey M.W."/>
            <person name="Ramaiya P."/>
            <person name="Nelson B.A."/>
            <person name="Brody-Karpin S.D."/>
            <person name="Zaretsky E.J."/>
            <person name="Tang M."/>
            <person name="Lopez de Leon A."/>
            <person name="Xiang H."/>
            <person name="Gusti V."/>
            <person name="Clausen I.G."/>
            <person name="Olsen P.B."/>
            <person name="Rasmussen M.D."/>
            <person name="Andersen J.T."/>
            <person name="Joergensen P.L."/>
            <person name="Larsen T.S."/>
            <person name="Sorokin A."/>
            <person name="Bolotin A."/>
            <person name="Lapidus A."/>
            <person name="Galleron N."/>
            <person name="Ehrlich S.D."/>
            <person name="Berka R.M."/>
        </authorList>
    </citation>
    <scope>NUCLEOTIDE SEQUENCE [LARGE SCALE GENOMIC DNA]</scope>
    <source>
        <strain>ATCC 14580 / DSM 13 / JCM 2505 / CCUG 7422 / NBRC 12200 / NCIMB 9375 / NCTC 10341 / NRRL NRS-1264 / Gibson 46</strain>
    </source>
</reference>
<reference key="3">
    <citation type="submission" date="2007-04" db="EMBL/GenBank/DDBJ databases">
        <authorList>
            <person name="Berka R.M."/>
            <person name="Rey M.W."/>
            <person name="Ramaiya P."/>
        </authorList>
    </citation>
    <scope>SEQUENCE REVISION TO 131</scope>
</reference>
<dbReference type="EMBL" id="AE017333">
    <property type="protein sequence ID" value="AAU40717.1"/>
    <property type="molecule type" value="Genomic_DNA"/>
</dbReference>
<dbReference type="EMBL" id="CP000002">
    <property type="protein sequence ID" value="AAU23357.2"/>
    <property type="molecule type" value="Genomic_DNA"/>
</dbReference>
<dbReference type="RefSeq" id="WP_003181725.1">
    <property type="nucleotide sequence ID" value="NC_006322.1"/>
</dbReference>
<dbReference type="SMR" id="Q65JP7"/>
<dbReference type="STRING" id="279010.BL05160"/>
<dbReference type="GeneID" id="92861585"/>
<dbReference type="KEGG" id="bld:BLi01822"/>
<dbReference type="KEGG" id="bli:BL05160"/>
<dbReference type="eggNOG" id="COG0806">
    <property type="taxonomic scope" value="Bacteria"/>
</dbReference>
<dbReference type="HOGENOM" id="CLU_077636_3_1_9"/>
<dbReference type="Proteomes" id="UP000000606">
    <property type="component" value="Chromosome"/>
</dbReference>
<dbReference type="GO" id="GO:0005737">
    <property type="term" value="C:cytoplasm"/>
    <property type="evidence" value="ECO:0007669"/>
    <property type="project" value="UniProtKB-SubCell"/>
</dbReference>
<dbReference type="GO" id="GO:0005840">
    <property type="term" value="C:ribosome"/>
    <property type="evidence" value="ECO:0007669"/>
    <property type="project" value="InterPro"/>
</dbReference>
<dbReference type="GO" id="GO:0043022">
    <property type="term" value="F:ribosome binding"/>
    <property type="evidence" value="ECO:0007669"/>
    <property type="project" value="InterPro"/>
</dbReference>
<dbReference type="GO" id="GO:0042274">
    <property type="term" value="P:ribosomal small subunit biogenesis"/>
    <property type="evidence" value="ECO:0007669"/>
    <property type="project" value="UniProtKB-UniRule"/>
</dbReference>
<dbReference type="GO" id="GO:0006364">
    <property type="term" value="P:rRNA processing"/>
    <property type="evidence" value="ECO:0007669"/>
    <property type="project" value="UniProtKB-UniRule"/>
</dbReference>
<dbReference type="Gene3D" id="2.30.30.240">
    <property type="entry name" value="PRC-barrel domain"/>
    <property type="match status" value="1"/>
</dbReference>
<dbReference type="Gene3D" id="2.40.30.60">
    <property type="entry name" value="RimM"/>
    <property type="match status" value="1"/>
</dbReference>
<dbReference type="HAMAP" id="MF_00014">
    <property type="entry name" value="Ribosome_mat_RimM"/>
    <property type="match status" value="1"/>
</dbReference>
<dbReference type="InterPro" id="IPR027275">
    <property type="entry name" value="PRC-brl_dom"/>
</dbReference>
<dbReference type="InterPro" id="IPR011033">
    <property type="entry name" value="PRC_barrel-like_sf"/>
</dbReference>
<dbReference type="InterPro" id="IPR011961">
    <property type="entry name" value="RimM"/>
</dbReference>
<dbReference type="InterPro" id="IPR002676">
    <property type="entry name" value="RimM_N"/>
</dbReference>
<dbReference type="InterPro" id="IPR036976">
    <property type="entry name" value="RimM_N_sf"/>
</dbReference>
<dbReference type="InterPro" id="IPR009000">
    <property type="entry name" value="Transl_B-barrel_sf"/>
</dbReference>
<dbReference type="NCBIfam" id="TIGR02273">
    <property type="entry name" value="16S_RimM"/>
    <property type="match status" value="1"/>
</dbReference>
<dbReference type="PANTHER" id="PTHR33692">
    <property type="entry name" value="RIBOSOME MATURATION FACTOR RIMM"/>
    <property type="match status" value="1"/>
</dbReference>
<dbReference type="PANTHER" id="PTHR33692:SF1">
    <property type="entry name" value="RIBOSOME MATURATION FACTOR RIMM"/>
    <property type="match status" value="1"/>
</dbReference>
<dbReference type="Pfam" id="PF05239">
    <property type="entry name" value="PRC"/>
    <property type="match status" value="1"/>
</dbReference>
<dbReference type="Pfam" id="PF01782">
    <property type="entry name" value="RimM"/>
    <property type="match status" value="1"/>
</dbReference>
<dbReference type="SUPFAM" id="SSF50346">
    <property type="entry name" value="PRC-barrel domain"/>
    <property type="match status" value="1"/>
</dbReference>
<dbReference type="SUPFAM" id="SSF50447">
    <property type="entry name" value="Translation proteins"/>
    <property type="match status" value="1"/>
</dbReference>
<protein>
    <recommendedName>
        <fullName evidence="1">Ribosome maturation factor RimM</fullName>
    </recommendedName>
</protein>
<proteinExistence type="inferred from homology"/>
<name>RIMM_BACLD</name>
<comment type="function">
    <text evidence="1">An accessory protein needed during the final step in the assembly of 30S ribosomal subunit, possibly for assembly of the head region. Essential for efficient processing of 16S rRNA. May be needed both before and after RbfA during the maturation of 16S rRNA. It has affinity for free ribosomal 30S subunits but not for 70S ribosomes.</text>
</comment>
<comment type="subunit">
    <text evidence="1">Binds ribosomal protein uS19.</text>
</comment>
<comment type="subcellular location">
    <subcellularLocation>
        <location evidence="1">Cytoplasm</location>
    </subcellularLocation>
</comment>
<comment type="domain">
    <text evidence="1">The PRC barrel domain binds ribosomal protein uS19.</text>
</comment>
<comment type="similarity">
    <text evidence="1">Belongs to the RimM family.</text>
</comment>
<organism>
    <name type="scientific">Bacillus licheniformis (strain ATCC 14580 / DSM 13 / JCM 2505 / CCUG 7422 / NBRC 12200 / NCIMB 9375 / NCTC 10341 / NRRL NRS-1264 / Gibson 46)</name>
    <dbReference type="NCBI Taxonomy" id="279010"/>
    <lineage>
        <taxon>Bacteria</taxon>
        <taxon>Bacillati</taxon>
        <taxon>Bacillota</taxon>
        <taxon>Bacilli</taxon>
        <taxon>Bacillales</taxon>
        <taxon>Bacillaceae</taxon>
        <taxon>Bacillus</taxon>
    </lineage>
</organism>
<feature type="chain" id="PRO_0000244111" description="Ribosome maturation factor RimM">
    <location>
        <begin position="1"/>
        <end position="174"/>
    </location>
</feature>
<feature type="domain" description="PRC barrel" evidence="1">
    <location>
        <begin position="98"/>
        <end position="171"/>
    </location>
</feature>
<gene>
    <name evidence="1" type="primary">rimM</name>
    <name type="ordered locus">BLi01822</name>
    <name type="ordered locus">BL05160</name>
</gene>
<evidence type="ECO:0000255" key="1">
    <source>
        <dbReference type="HAMAP-Rule" id="MF_00014"/>
    </source>
</evidence>